<accession>A8LWZ6</accession>
<proteinExistence type="inferred from homology"/>
<comment type="subcellular location">
    <subcellularLocation>
        <location evidence="1">Cytoplasm</location>
    </subcellularLocation>
</comment>
<comment type="similarity">
    <text evidence="1">Belongs to the TACO1 family.</text>
</comment>
<feature type="chain" id="PRO_1000083168" description="Probable transcriptional regulatory protein Sare_1779">
    <location>
        <begin position="1"/>
        <end position="249"/>
    </location>
</feature>
<protein>
    <recommendedName>
        <fullName evidence="1">Probable transcriptional regulatory protein Sare_1779</fullName>
    </recommendedName>
</protein>
<dbReference type="EMBL" id="CP000850">
    <property type="protein sequence ID" value="ABV97666.1"/>
    <property type="molecule type" value="Genomic_DNA"/>
</dbReference>
<dbReference type="SMR" id="A8LWZ6"/>
<dbReference type="STRING" id="391037.Sare_1779"/>
<dbReference type="KEGG" id="saq:Sare_1779"/>
<dbReference type="PATRIC" id="fig|391037.6.peg.1811"/>
<dbReference type="eggNOG" id="COG0217">
    <property type="taxonomic scope" value="Bacteria"/>
</dbReference>
<dbReference type="HOGENOM" id="CLU_062974_2_2_11"/>
<dbReference type="OrthoDB" id="9781053at2"/>
<dbReference type="GO" id="GO:0005829">
    <property type="term" value="C:cytosol"/>
    <property type="evidence" value="ECO:0007669"/>
    <property type="project" value="TreeGrafter"/>
</dbReference>
<dbReference type="GO" id="GO:0003677">
    <property type="term" value="F:DNA binding"/>
    <property type="evidence" value="ECO:0007669"/>
    <property type="project" value="UniProtKB-UniRule"/>
</dbReference>
<dbReference type="GO" id="GO:0006355">
    <property type="term" value="P:regulation of DNA-templated transcription"/>
    <property type="evidence" value="ECO:0007669"/>
    <property type="project" value="UniProtKB-UniRule"/>
</dbReference>
<dbReference type="FunFam" id="1.10.10.200:FF:000002">
    <property type="entry name" value="Probable transcriptional regulatory protein CLM62_37755"/>
    <property type="match status" value="1"/>
</dbReference>
<dbReference type="FunFam" id="3.30.70.980:FF:000006">
    <property type="entry name" value="Probable transcriptional regulatory protein J113_18170"/>
    <property type="match status" value="1"/>
</dbReference>
<dbReference type="Gene3D" id="1.10.10.200">
    <property type="match status" value="1"/>
</dbReference>
<dbReference type="Gene3D" id="3.30.70.980">
    <property type="match status" value="2"/>
</dbReference>
<dbReference type="HAMAP" id="MF_00693">
    <property type="entry name" value="Transcrip_reg_TACO1"/>
    <property type="match status" value="1"/>
</dbReference>
<dbReference type="InterPro" id="IPR017856">
    <property type="entry name" value="Integrase-like_N"/>
</dbReference>
<dbReference type="InterPro" id="IPR048300">
    <property type="entry name" value="TACO1_YebC-like_2nd/3rd_dom"/>
</dbReference>
<dbReference type="InterPro" id="IPR049083">
    <property type="entry name" value="TACO1_YebC_N"/>
</dbReference>
<dbReference type="InterPro" id="IPR002876">
    <property type="entry name" value="Transcrip_reg_TACO1-like"/>
</dbReference>
<dbReference type="InterPro" id="IPR026564">
    <property type="entry name" value="Transcrip_reg_TACO1-like_dom3"/>
</dbReference>
<dbReference type="InterPro" id="IPR029072">
    <property type="entry name" value="YebC-like"/>
</dbReference>
<dbReference type="NCBIfam" id="NF001030">
    <property type="entry name" value="PRK00110.1"/>
    <property type="match status" value="1"/>
</dbReference>
<dbReference type="NCBIfam" id="NF009044">
    <property type="entry name" value="PRK12378.1"/>
    <property type="match status" value="1"/>
</dbReference>
<dbReference type="NCBIfam" id="TIGR01033">
    <property type="entry name" value="YebC/PmpR family DNA-binding transcriptional regulator"/>
    <property type="match status" value="1"/>
</dbReference>
<dbReference type="PANTHER" id="PTHR12532:SF6">
    <property type="entry name" value="TRANSCRIPTIONAL REGULATORY PROTEIN YEBC-RELATED"/>
    <property type="match status" value="1"/>
</dbReference>
<dbReference type="PANTHER" id="PTHR12532">
    <property type="entry name" value="TRANSLATIONAL ACTIVATOR OF CYTOCHROME C OXIDASE 1"/>
    <property type="match status" value="1"/>
</dbReference>
<dbReference type="Pfam" id="PF20772">
    <property type="entry name" value="TACO1_YebC_N"/>
    <property type="match status" value="1"/>
</dbReference>
<dbReference type="Pfam" id="PF01709">
    <property type="entry name" value="Transcrip_reg"/>
    <property type="match status" value="1"/>
</dbReference>
<dbReference type="SUPFAM" id="SSF75625">
    <property type="entry name" value="YebC-like"/>
    <property type="match status" value="1"/>
</dbReference>
<evidence type="ECO:0000255" key="1">
    <source>
        <dbReference type="HAMAP-Rule" id="MF_00693"/>
    </source>
</evidence>
<name>Y1779_SALAI</name>
<organism>
    <name type="scientific">Salinispora arenicola (strain CNS-205)</name>
    <dbReference type="NCBI Taxonomy" id="391037"/>
    <lineage>
        <taxon>Bacteria</taxon>
        <taxon>Bacillati</taxon>
        <taxon>Actinomycetota</taxon>
        <taxon>Actinomycetes</taxon>
        <taxon>Micromonosporales</taxon>
        <taxon>Micromonosporaceae</taxon>
        <taxon>Salinispora</taxon>
    </lineage>
</organism>
<reference key="1">
    <citation type="submission" date="2007-10" db="EMBL/GenBank/DDBJ databases">
        <title>Complete sequence of Salinispora arenicola CNS-205.</title>
        <authorList>
            <consortium name="US DOE Joint Genome Institute"/>
            <person name="Copeland A."/>
            <person name="Lucas S."/>
            <person name="Lapidus A."/>
            <person name="Barry K."/>
            <person name="Glavina del Rio T."/>
            <person name="Dalin E."/>
            <person name="Tice H."/>
            <person name="Pitluck S."/>
            <person name="Foster B."/>
            <person name="Schmutz J."/>
            <person name="Larimer F."/>
            <person name="Land M."/>
            <person name="Hauser L."/>
            <person name="Kyrpides N."/>
            <person name="Ivanova N."/>
            <person name="Jensen P.R."/>
            <person name="Moore B.S."/>
            <person name="Penn K."/>
            <person name="Jenkins C."/>
            <person name="Udwary D."/>
            <person name="Xiang L."/>
            <person name="Gontang E."/>
            <person name="Richardson P."/>
        </authorList>
    </citation>
    <scope>NUCLEOTIDE SEQUENCE [LARGE SCALE GENOMIC DNA]</scope>
    <source>
        <strain>CNS-205</strain>
    </source>
</reference>
<gene>
    <name type="ordered locus">Sare_1779</name>
</gene>
<keyword id="KW-0963">Cytoplasm</keyword>
<keyword id="KW-0238">DNA-binding</keyword>
<keyword id="KW-0804">Transcription</keyword>
<keyword id="KW-0805">Transcription regulation</keyword>
<sequence length="249" mass="26398">MSGHSKWATTKHKKAVIDAKRGKMFAKLIKNVEVAARTGGGDPAGNPTLYDAIQKAKKNSVPNDNIDRAVKRGSGLEAGGADYQTVMYEGYGPNGVALLIECLTDNRNRAATEVRTALTRNGGSFADAGSVSYLFSRKGVVIVAKAGTTEDDVMLAVLDAGAEEVNDLGESFEVLSEPGDLVAVRTALQDAGIEYESAESSLVPSVSVPLDEDGARKILKLIDVLEDSDDVQNVYANFDVSDEMLARLG</sequence>